<reference key="1">
    <citation type="submission" date="2008-06" db="EMBL/GenBank/DDBJ databases">
        <title>Lactobacillus casei BL23 complete genome sequence.</title>
        <authorList>
            <person name="Maze A."/>
            <person name="Boel G."/>
            <person name="Bourand A."/>
            <person name="Loux V."/>
            <person name="Gibrat J.F."/>
            <person name="Zuniga M."/>
            <person name="Hartke A."/>
            <person name="Deutscher J."/>
        </authorList>
    </citation>
    <scope>NUCLEOTIDE SEQUENCE [LARGE SCALE GENOMIC DNA]</scope>
    <source>
        <strain>BL23</strain>
    </source>
</reference>
<name>SYI_LACCB</name>
<keyword id="KW-0030">Aminoacyl-tRNA synthetase</keyword>
<keyword id="KW-0067">ATP-binding</keyword>
<keyword id="KW-0963">Cytoplasm</keyword>
<keyword id="KW-0436">Ligase</keyword>
<keyword id="KW-0479">Metal-binding</keyword>
<keyword id="KW-0547">Nucleotide-binding</keyword>
<keyword id="KW-0648">Protein biosynthesis</keyword>
<keyword id="KW-0862">Zinc</keyword>
<accession>B3WDZ1</accession>
<comment type="function">
    <text evidence="1">Catalyzes the attachment of isoleucine to tRNA(Ile). As IleRS can inadvertently accommodate and process structurally similar amino acids such as valine, to avoid such errors it has two additional distinct tRNA(Ile)-dependent editing activities. One activity is designated as 'pretransfer' editing and involves the hydrolysis of activated Val-AMP. The other activity is designated 'posttransfer' editing and involves deacylation of mischarged Val-tRNA(Ile).</text>
</comment>
<comment type="catalytic activity">
    <reaction evidence="1">
        <text>tRNA(Ile) + L-isoleucine + ATP = L-isoleucyl-tRNA(Ile) + AMP + diphosphate</text>
        <dbReference type="Rhea" id="RHEA:11060"/>
        <dbReference type="Rhea" id="RHEA-COMP:9666"/>
        <dbReference type="Rhea" id="RHEA-COMP:9695"/>
        <dbReference type="ChEBI" id="CHEBI:30616"/>
        <dbReference type="ChEBI" id="CHEBI:33019"/>
        <dbReference type="ChEBI" id="CHEBI:58045"/>
        <dbReference type="ChEBI" id="CHEBI:78442"/>
        <dbReference type="ChEBI" id="CHEBI:78528"/>
        <dbReference type="ChEBI" id="CHEBI:456215"/>
        <dbReference type="EC" id="6.1.1.5"/>
    </reaction>
</comment>
<comment type="cofactor">
    <cofactor evidence="1">
        <name>Zn(2+)</name>
        <dbReference type="ChEBI" id="CHEBI:29105"/>
    </cofactor>
    <text evidence="1">Binds 1 zinc ion per subunit.</text>
</comment>
<comment type="subunit">
    <text evidence="1">Monomer.</text>
</comment>
<comment type="subcellular location">
    <subcellularLocation>
        <location evidence="1">Cytoplasm</location>
    </subcellularLocation>
</comment>
<comment type="domain">
    <text evidence="1">IleRS has two distinct active sites: one for aminoacylation and one for editing. The misactivated valine is translocated from the active site to the editing site, which sterically excludes the correctly activated isoleucine. The single editing site contains two valyl binding pockets, one specific for each substrate (Val-AMP or Val-tRNA(Ile)).</text>
</comment>
<comment type="similarity">
    <text evidence="1">Belongs to the class-I aminoacyl-tRNA synthetase family. IleS type 1 subfamily.</text>
</comment>
<sequence>MKIKDTLNMGKTSFPMRAGLPKNEPIWQKKWDEDHVYEQRQKLNEGKPTFMLHDGPPFANGNIHMGHALNKISKDIIVRYKSMNGFRAPYVPGWDTHGLPIEQQLAKQGVKRKEMSMTDYRELCRQFAMQEIDKQRTDFKRLGVMGDWEHPYITLQHHYEASEIRVFGAMAKKGYIYHGLKPVYWSWSSESTLAEAEIEYHDDKSPSIYVAFKVVDGKGLLDTDTYLVIWTTTPWTIPANYGITVNPRFDYVQVQVGDKKYVVAAELLDRVAEEIGWENPKILKTFKGTDMDKMTAQHPLYDRTSLVMNADHVTLDAGTGLVHTAPGHGEDDYKVGVKYGLPVVSVVDAKGYMNEYAPGFEGVFYDDANKQITQALADKGALLKLDFFTHSYPHDWRTKKPVIFRATTQWFASIDAFRDQILKAIDTVDFKPSWGKTRLYNMIRDRGDWVISRQRAWGVPLPIFYAEDGEPIIEEETINHVADLFGKYGSNVWFEREAKDLLPEGYTNPHSPNGQFTKEKDIMDVWFDSGSSHQAVLAARPELSFPADLYLEGSDQYRGWFNSSLITSVAATGVAPYRGILSQGFTLDGKGRKMSKSLGNTIVPATIEKQFGAEIIRLWVATVDSSSDVRVSVDNFAQTSEAYRKIRNTMRFMVANTGDFDPEKDTVAYDELGSVDRYMMVRLNQIIKQVKTAYDAYDFATVEKTISSFLVNDLSAFYLDVAKDVVYIEAKDDPKRRGMQTVMFAALLTVTKLITPILPHTAEEVWPYLKQPEAYAALADMPEAEQFDDESQLLDIWSGFMDFRSEVQKALELARDNKVIGKSLEAAVTVYPSEPVRDMLDDVDANVMQLLITSHFEIAPATTKAPADAEQFDDMAVVVKHADGEVCPRCRMVRTDIGTDPKLPQLCSRCAAIVEANFPDAVTNGFDK</sequence>
<proteinExistence type="inferred from homology"/>
<dbReference type="EC" id="6.1.1.5" evidence="1"/>
<dbReference type="EMBL" id="FM177140">
    <property type="protein sequence ID" value="CAQ66592.1"/>
    <property type="molecule type" value="Genomic_DNA"/>
</dbReference>
<dbReference type="SMR" id="B3WDZ1"/>
<dbReference type="KEGG" id="lcb:LCABL_15110"/>
<dbReference type="HOGENOM" id="CLU_001493_7_1_9"/>
<dbReference type="GO" id="GO:0005829">
    <property type="term" value="C:cytosol"/>
    <property type="evidence" value="ECO:0007669"/>
    <property type="project" value="TreeGrafter"/>
</dbReference>
<dbReference type="GO" id="GO:0002161">
    <property type="term" value="F:aminoacyl-tRNA deacylase activity"/>
    <property type="evidence" value="ECO:0007669"/>
    <property type="project" value="InterPro"/>
</dbReference>
<dbReference type="GO" id="GO:0005524">
    <property type="term" value="F:ATP binding"/>
    <property type="evidence" value="ECO:0007669"/>
    <property type="project" value="UniProtKB-UniRule"/>
</dbReference>
<dbReference type="GO" id="GO:0004822">
    <property type="term" value="F:isoleucine-tRNA ligase activity"/>
    <property type="evidence" value="ECO:0007669"/>
    <property type="project" value="UniProtKB-UniRule"/>
</dbReference>
<dbReference type="GO" id="GO:0000049">
    <property type="term" value="F:tRNA binding"/>
    <property type="evidence" value="ECO:0007669"/>
    <property type="project" value="InterPro"/>
</dbReference>
<dbReference type="GO" id="GO:0008270">
    <property type="term" value="F:zinc ion binding"/>
    <property type="evidence" value="ECO:0007669"/>
    <property type="project" value="UniProtKB-UniRule"/>
</dbReference>
<dbReference type="GO" id="GO:0006428">
    <property type="term" value="P:isoleucyl-tRNA aminoacylation"/>
    <property type="evidence" value="ECO:0007669"/>
    <property type="project" value="UniProtKB-UniRule"/>
</dbReference>
<dbReference type="CDD" id="cd07960">
    <property type="entry name" value="Anticodon_Ia_Ile_BEm"/>
    <property type="match status" value="1"/>
</dbReference>
<dbReference type="CDD" id="cd00818">
    <property type="entry name" value="IleRS_core"/>
    <property type="match status" value="1"/>
</dbReference>
<dbReference type="FunFam" id="1.10.10.830:FF:000001">
    <property type="entry name" value="Isoleucine--tRNA ligase"/>
    <property type="match status" value="1"/>
</dbReference>
<dbReference type="FunFam" id="1.10.730.20:FF:000001">
    <property type="entry name" value="Isoleucine--tRNA ligase"/>
    <property type="match status" value="1"/>
</dbReference>
<dbReference type="FunFam" id="3.40.50.620:FF:000152">
    <property type="entry name" value="Isoleucine--tRNA ligase"/>
    <property type="match status" value="1"/>
</dbReference>
<dbReference type="FunFam" id="3.90.740.10:FF:000006">
    <property type="entry name" value="Isoleucine--tRNA ligase"/>
    <property type="match status" value="1"/>
</dbReference>
<dbReference type="Gene3D" id="1.10.730.20">
    <property type="match status" value="1"/>
</dbReference>
<dbReference type="Gene3D" id="3.40.50.620">
    <property type="entry name" value="HUPs"/>
    <property type="match status" value="2"/>
</dbReference>
<dbReference type="Gene3D" id="1.10.10.830">
    <property type="entry name" value="Ile-tRNA synthetase CP2 domain-like"/>
    <property type="match status" value="1"/>
</dbReference>
<dbReference type="HAMAP" id="MF_02002">
    <property type="entry name" value="Ile_tRNA_synth_type1"/>
    <property type="match status" value="1"/>
</dbReference>
<dbReference type="InterPro" id="IPR001412">
    <property type="entry name" value="aa-tRNA-synth_I_CS"/>
</dbReference>
<dbReference type="InterPro" id="IPR002300">
    <property type="entry name" value="aa-tRNA-synth_Ia"/>
</dbReference>
<dbReference type="InterPro" id="IPR033708">
    <property type="entry name" value="Anticodon_Ile_BEm"/>
</dbReference>
<dbReference type="InterPro" id="IPR002301">
    <property type="entry name" value="Ile-tRNA-ligase"/>
</dbReference>
<dbReference type="InterPro" id="IPR023585">
    <property type="entry name" value="Ile-tRNA-ligase_type1"/>
</dbReference>
<dbReference type="InterPro" id="IPR050081">
    <property type="entry name" value="Ile-tRNA_ligase"/>
</dbReference>
<dbReference type="InterPro" id="IPR013155">
    <property type="entry name" value="M/V/L/I-tRNA-synth_anticd-bd"/>
</dbReference>
<dbReference type="InterPro" id="IPR014729">
    <property type="entry name" value="Rossmann-like_a/b/a_fold"/>
</dbReference>
<dbReference type="InterPro" id="IPR009080">
    <property type="entry name" value="tRNAsynth_Ia_anticodon-bd"/>
</dbReference>
<dbReference type="InterPro" id="IPR009008">
    <property type="entry name" value="Val/Leu/Ile-tRNA-synth_edit"/>
</dbReference>
<dbReference type="InterPro" id="IPR010663">
    <property type="entry name" value="Znf_FPG/IleRS"/>
</dbReference>
<dbReference type="NCBIfam" id="TIGR00392">
    <property type="entry name" value="ileS"/>
    <property type="match status" value="1"/>
</dbReference>
<dbReference type="PANTHER" id="PTHR42765:SF1">
    <property type="entry name" value="ISOLEUCINE--TRNA LIGASE, MITOCHONDRIAL"/>
    <property type="match status" value="1"/>
</dbReference>
<dbReference type="PANTHER" id="PTHR42765">
    <property type="entry name" value="SOLEUCYL-TRNA SYNTHETASE"/>
    <property type="match status" value="1"/>
</dbReference>
<dbReference type="Pfam" id="PF08264">
    <property type="entry name" value="Anticodon_1"/>
    <property type="match status" value="1"/>
</dbReference>
<dbReference type="Pfam" id="PF00133">
    <property type="entry name" value="tRNA-synt_1"/>
    <property type="match status" value="1"/>
</dbReference>
<dbReference type="Pfam" id="PF06827">
    <property type="entry name" value="zf-FPG_IleRS"/>
    <property type="match status" value="1"/>
</dbReference>
<dbReference type="PRINTS" id="PR00984">
    <property type="entry name" value="TRNASYNTHILE"/>
</dbReference>
<dbReference type="SUPFAM" id="SSF47323">
    <property type="entry name" value="Anticodon-binding domain of a subclass of class I aminoacyl-tRNA synthetases"/>
    <property type="match status" value="1"/>
</dbReference>
<dbReference type="SUPFAM" id="SSF52374">
    <property type="entry name" value="Nucleotidylyl transferase"/>
    <property type="match status" value="1"/>
</dbReference>
<dbReference type="SUPFAM" id="SSF50677">
    <property type="entry name" value="ValRS/IleRS/LeuRS editing domain"/>
    <property type="match status" value="1"/>
</dbReference>
<dbReference type="PROSITE" id="PS00178">
    <property type="entry name" value="AA_TRNA_LIGASE_I"/>
    <property type="match status" value="1"/>
</dbReference>
<feature type="chain" id="PRO_1000189174" description="Isoleucine--tRNA ligase">
    <location>
        <begin position="1"/>
        <end position="928"/>
    </location>
</feature>
<feature type="short sequence motif" description="'HIGH' region">
    <location>
        <begin position="57"/>
        <end position="67"/>
    </location>
</feature>
<feature type="short sequence motif" description="'KMSKS' region">
    <location>
        <begin position="593"/>
        <end position="597"/>
    </location>
</feature>
<feature type="binding site" evidence="1">
    <location>
        <position position="552"/>
    </location>
    <ligand>
        <name>L-isoleucyl-5'-AMP</name>
        <dbReference type="ChEBI" id="CHEBI:178002"/>
    </ligand>
</feature>
<feature type="binding site" evidence="1">
    <location>
        <position position="596"/>
    </location>
    <ligand>
        <name>ATP</name>
        <dbReference type="ChEBI" id="CHEBI:30616"/>
    </ligand>
</feature>
<feature type="binding site" evidence="1">
    <location>
        <position position="887"/>
    </location>
    <ligand>
        <name>Zn(2+)</name>
        <dbReference type="ChEBI" id="CHEBI:29105"/>
    </ligand>
</feature>
<feature type="binding site" evidence="1">
    <location>
        <position position="890"/>
    </location>
    <ligand>
        <name>Zn(2+)</name>
        <dbReference type="ChEBI" id="CHEBI:29105"/>
    </ligand>
</feature>
<feature type="binding site" evidence="1">
    <location>
        <position position="907"/>
    </location>
    <ligand>
        <name>Zn(2+)</name>
        <dbReference type="ChEBI" id="CHEBI:29105"/>
    </ligand>
</feature>
<feature type="binding site" evidence="1">
    <location>
        <position position="910"/>
    </location>
    <ligand>
        <name>Zn(2+)</name>
        <dbReference type="ChEBI" id="CHEBI:29105"/>
    </ligand>
</feature>
<organism>
    <name type="scientific">Lacticaseibacillus casei (strain BL23)</name>
    <name type="common">Lactobacillus casei</name>
    <dbReference type="NCBI Taxonomy" id="543734"/>
    <lineage>
        <taxon>Bacteria</taxon>
        <taxon>Bacillati</taxon>
        <taxon>Bacillota</taxon>
        <taxon>Bacilli</taxon>
        <taxon>Lactobacillales</taxon>
        <taxon>Lactobacillaceae</taxon>
        <taxon>Lacticaseibacillus</taxon>
    </lineage>
</organism>
<evidence type="ECO:0000255" key="1">
    <source>
        <dbReference type="HAMAP-Rule" id="MF_02002"/>
    </source>
</evidence>
<protein>
    <recommendedName>
        <fullName evidence="1">Isoleucine--tRNA ligase</fullName>
        <ecNumber evidence="1">6.1.1.5</ecNumber>
    </recommendedName>
    <alternativeName>
        <fullName evidence="1">Isoleucyl-tRNA synthetase</fullName>
        <shortName evidence="1">IleRS</shortName>
    </alternativeName>
</protein>
<gene>
    <name evidence="1" type="primary">ileS</name>
    <name type="ordered locus">LCABL_15110</name>
</gene>